<accession>Q7CFX8</accession>
<accession>Q74Y49</accession>
<protein>
    <recommendedName>
        <fullName evidence="1">Rhomboid protease GlpG</fullName>
        <ecNumber evidence="1">3.4.21.105</ecNumber>
    </recommendedName>
    <alternativeName>
        <fullName evidence="1">Intramembrane serine protease</fullName>
    </alternativeName>
</protein>
<reference key="1">
    <citation type="journal article" date="2001" name="Nature">
        <title>Genome sequence of Yersinia pestis, the causative agent of plague.</title>
        <authorList>
            <person name="Parkhill J."/>
            <person name="Wren B.W."/>
            <person name="Thomson N.R."/>
            <person name="Titball R.W."/>
            <person name="Holden M.T.G."/>
            <person name="Prentice M.B."/>
            <person name="Sebaihia M."/>
            <person name="James K.D."/>
            <person name="Churcher C.M."/>
            <person name="Mungall K.L."/>
            <person name="Baker S."/>
            <person name="Basham D."/>
            <person name="Bentley S.D."/>
            <person name="Brooks K."/>
            <person name="Cerdeno-Tarraga A.-M."/>
            <person name="Chillingworth T."/>
            <person name="Cronin A."/>
            <person name="Davies R.M."/>
            <person name="Davis P."/>
            <person name="Dougan G."/>
            <person name="Feltwell T."/>
            <person name="Hamlin N."/>
            <person name="Holroyd S."/>
            <person name="Jagels K."/>
            <person name="Karlyshev A.V."/>
            <person name="Leather S."/>
            <person name="Moule S."/>
            <person name="Oyston P.C.F."/>
            <person name="Quail M.A."/>
            <person name="Rutherford K.M."/>
            <person name="Simmonds M."/>
            <person name="Skelton J."/>
            <person name="Stevens K."/>
            <person name="Whitehead S."/>
            <person name="Barrell B.G."/>
        </authorList>
    </citation>
    <scope>NUCLEOTIDE SEQUENCE [LARGE SCALE GENOMIC DNA]</scope>
    <source>
        <strain>CO-92 / Biovar Orientalis</strain>
    </source>
</reference>
<reference key="2">
    <citation type="journal article" date="2002" name="J. Bacteriol.">
        <title>Genome sequence of Yersinia pestis KIM.</title>
        <authorList>
            <person name="Deng W."/>
            <person name="Burland V."/>
            <person name="Plunkett G. III"/>
            <person name="Boutin A."/>
            <person name="Mayhew G.F."/>
            <person name="Liss P."/>
            <person name="Perna N.T."/>
            <person name="Rose D.J."/>
            <person name="Mau B."/>
            <person name="Zhou S."/>
            <person name="Schwartz D.C."/>
            <person name="Fetherston J.D."/>
            <person name="Lindler L.E."/>
            <person name="Brubaker R.R."/>
            <person name="Plano G.V."/>
            <person name="Straley S.C."/>
            <person name="McDonough K.A."/>
            <person name="Nilles M.L."/>
            <person name="Matson J.S."/>
            <person name="Blattner F.R."/>
            <person name="Perry R.D."/>
        </authorList>
    </citation>
    <scope>NUCLEOTIDE SEQUENCE [LARGE SCALE GENOMIC DNA]</scope>
    <source>
        <strain>KIM10+ / Biovar Mediaevalis</strain>
    </source>
</reference>
<reference key="3">
    <citation type="journal article" date="2004" name="DNA Res.">
        <title>Complete genome sequence of Yersinia pestis strain 91001, an isolate avirulent to humans.</title>
        <authorList>
            <person name="Song Y."/>
            <person name="Tong Z."/>
            <person name="Wang J."/>
            <person name="Wang L."/>
            <person name="Guo Z."/>
            <person name="Han Y."/>
            <person name="Zhang J."/>
            <person name="Pei D."/>
            <person name="Zhou D."/>
            <person name="Qin H."/>
            <person name="Pang X."/>
            <person name="Han Y."/>
            <person name="Zhai J."/>
            <person name="Li M."/>
            <person name="Cui B."/>
            <person name="Qi Z."/>
            <person name="Jin L."/>
            <person name="Dai R."/>
            <person name="Chen F."/>
            <person name="Li S."/>
            <person name="Ye C."/>
            <person name="Du Z."/>
            <person name="Lin W."/>
            <person name="Wang J."/>
            <person name="Yu J."/>
            <person name="Yang H."/>
            <person name="Wang J."/>
            <person name="Huang P."/>
            <person name="Yang R."/>
        </authorList>
    </citation>
    <scope>NUCLEOTIDE SEQUENCE [LARGE SCALE GENOMIC DNA]</scope>
    <source>
        <strain>91001 / Biovar Mediaevalis</strain>
    </source>
</reference>
<keyword id="KW-0997">Cell inner membrane</keyword>
<keyword id="KW-1003">Cell membrane</keyword>
<keyword id="KW-0378">Hydrolase</keyword>
<keyword id="KW-0472">Membrane</keyword>
<keyword id="KW-0645">Protease</keyword>
<keyword id="KW-1185">Reference proteome</keyword>
<keyword id="KW-0720">Serine protease</keyword>
<keyword id="KW-0812">Transmembrane</keyword>
<keyword id="KW-1133">Transmembrane helix</keyword>
<sequence length="278" mass="31305">MTRVIVISNLRLAQAFVDYMATHHVALEIRPDAQGVEIWLADDEQLSAVQHELEQFLLDPLNPRYQAASWQAGNVNSNLPYQRFSYLQTLRSQAGPLTLSVMVLCIAIYILMLITGDMAVMSWLAWPYNSSQYLQIWRWVSHAFLHFSLLHILFNLMWWWYLGGQMEKRLGTSKLLVLTIVSAVFSGWGQSLFSGANFGGLSGVVYALMGYVWLTGERAPERGISLPRGLMAFSVLWLIAGYFDILGLSIANAAHVSGLIIGLLMAFWDTRNSARTVQ</sequence>
<feature type="chain" id="PRO_0000321700" description="Rhomboid protease GlpG">
    <location>
        <begin position="1"/>
        <end position="278"/>
    </location>
</feature>
<feature type="transmembrane region" description="Helical" evidence="1">
    <location>
        <begin position="94"/>
        <end position="114"/>
    </location>
</feature>
<feature type="transmembrane region" description="Helical" evidence="1">
    <location>
        <begin position="143"/>
        <end position="163"/>
    </location>
</feature>
<feature type="transmembrane region" description="Helical" evidence="1">
    <location>
        <begin position="170"/>
        <end position="189"/>
    </location>
</feature>
<feature type="transmembrane region" description="Helical" evidence="1">
    <location>
        <begin position="193"/>
        <end position="215"/>
    </location>
</feature>
<feature type="transmembrane region" description="Helical" evidence="1">
    <location>
        <begin position="224"/>
        <end position="241"/>
    </location>
</feature>
<feature type="transmembrane region" description="Helical" evidence="1">
    <location>
        <begin position="245"/>
        <end position="267"/>
    </location>
</feature>
<feature type="active site" description="Nucleophile" evidence="1">
    <location>
        <position position="202"/>
    </location>
</feature>
<feature type="active site" evidence="1">
    <location>
        <position position="255"/>
    </location>
</feature>
<gene>
    <name evidence="1" type="primary">glpG</name>
    <name type="ordered locus">YPO0121</name>
    <name type="ordered locus">y3898</name>
    <name type="ordered locus">YP_0123</name>
</gene>
<organism>
    <name type="scientific">Yersinia pestis</name>
    <dbReference type="NCBI Taxonomy" id="632"/>
    <lineage>
        <taxon>Bacteria</taxon>
        <taxon>Pseudomonadati</taxon>
        <taxon>Pseudomonadota</taxon>
        <taxon>Gammaproteobacteria</taxon>
        <taxon>Enterobacterales</taxon>
        <taxon>Yersiniaceae</taxon>
        <taxon>Yersinia</taxon>
    </lineage>
</organism>
<comment type="function">
    <text evidence="1">Rhomboid-type serine protease that catalyzes intramembrane proteolysis.</text>
</comment>
<comment type="catalytic activity">
    <reaction evidence="1">
        <text>Cleaves type-1 transmembrane domains using a catalytic dyad composed of serine and histidine that are contributed by different transmembrane domains.</text>
        <dbReference type="EC" id="3.4.21.105"/>
    </reaction>
</comment>
<comment type="subcellular location">
    <subcellularLocation>
        <location evidence="1">Cell inner membrane</location>
        <topology evidence="1">Multi-pass membrane protein</topology>
    </subcellularLocation>
</comment>
<comment type="similarity">
    <text evidence="1">Belongs to the peptidase S54 family.</text>
</comment>
<name>GLPG_YERPE</name>
<proteinExistence type="inferred from homology"/>
<dbReference type="EC" id="3.4.21.105" evidence="1"/>
<dbReference type="EMBL" id="AL590842">
    <property type="protein sequence ID" value="CAL18808.1"/>
    <property type="molecule type" value="Genomic_DNA"/>
</dbReference>
<dbReference type="EMBL" id="AE009952">
    <property type="protein sequence ID" value="AAM87443.1"/>
    <property type="molecule type" value="Genomic_DNA"/>
</dbReference>
<dbReference type="EMBL" id="AE017042">
    <property type="protein sequence ID" value="AAS60402.1"/>
    <property type="molecule type" value="Genomic_DNA"/>
</dbReference>
<dbReference type="PIR" id="AG0015">
    <property type="entry name" value="AG0015"/>
</dbReference>
<dbReference type="RefSeq" id="WP_002216348.1">
    <property type="nucleotide sequence ID" value="NZ_WUCM01000004.1"/>
</dbReference>
<dbReference type="RefSeq" id="YP_002345209.1">
    <property type="nucleotide sequence ID" value="NC_003143.1"/>
</dbReference>
<dbReference type="SMR" id="Q7CFX8"/>
<dbReference type="STRING" id="214092.YPO0121"/>
<dbReference type="PaxDb" id="214092-YPO0121"/>
<dbReference type="DNASU" id="1148845"/>
<dbReference type="EnsemblBacteria" id="AAS60402">
    <property type="protein sequence ID" value="AAS60402"/>
    <property type="gene ID" value="YP_0123"/>
</dbReference>
<dbReference type="GeneID" id="57974477"/>
<dbReference type="KEGG" id="ype:YPO0121"/>
<dbReference type="KEGG" id="ypk:y3898"/>
<dbReference type="KEGG" id="ypm:YP_0123"/>
<dbReference type="PATRIC" id="fig|214092.21.peg.346"/>
<dbReference type="eggNOG" id="COG0705">
    <property type="taxonomic scope" value="Bacteria"/>
</dbReference>
<dbReference type="HOGENOM" id="CLU_058989_0_0_6"/>
<dbReference type="OMA" id="LLGHCWI"/>
<dbReference type="OrthoDB" id="9778341at2"/>
<dbReference type="Proteomes" id="UP000000815">
    <property type="component" value="Chromosome"/>
</dbReference>
<dbReference type="Proteomes" id="UP000001019">
    <property type="component" value="Chromosome"/>
</dbReference>
<dbReference type="Proteomes" id="UP000002490">
    <property type="component" value="Chromosome"/>
</dbReference>
<dbReference type="GO" id="GO:0005886">
    <property type="term" value="C:plasma membrane"/>
    <property type="evidence" value="ECO:0007669"/>
    <property type="project" value="UniProtKB-SubCell"/>
</dbReference>
<dbReference type="GO" id="GO:0004252">
    <property type="term" value="F:serine-type endopeptidase activity"/>
    <property type="evidence" value="ECO:0000318"/>
    <property type="project" value="GO_Central"/>
</dbReference>
<dbReference type="GO" id="GO:0006508">
    <property type="term" value="P:proteolysis"/>
    <property type="evidence" value="ECO:0007669"/>
    <property type="project" value="UniProtKB-UniRule"/>
</dbReference>
<dbReference type="Gene3D" id="3.30.70.2350">
    <property type="match status" value="1"/>
</dbReference>
<dbReference type="Gene3D" id="1.20.1540.10">
    <property type="entry name" value="Rhomboid-like"/>
    <property type="match status" value="1"/>
</dbReference>
<dbReference type="HAMAP" id="MF_01594">
    <property type="entry name" value="Rhomboid_GlpG"/>
    <property type="match status" value="1"/>
</dbReference>
<dbReference type="InterPro" id="IPR038236">
    <property type="entry name" value="GlpG_N_sf"/>
</dbReference>
<dbReference type="InterPro" id="IPR022732">
    <property type="entry name" value="Peptidase_S54_GlpG_N"/>
</dbReference>
<dbReference type="InterPro" id="IPR022764">
    <property type="entry name" value="Peptidase_S54_rhomboid_dom"/>
</dbReference>
<dbReference type="InterPro" id="IPR035952">
    <property type="entry name" value="Rhomboid-like_sf"/>
</dbReference>
<dbReference type="InterPro" id="IPR023662">
    <property type="entry name" value="Rhomboid_protease_GlpG"/>
</dbReference>
<dbReference type="NCBIfam" id="NF008155">
    <property type="entry name" value="PRK10907.1"/>
    <property type="match status" value="1"/>
</dbReference>
<dbReference type="NCBIfam" id="TIGR04239">
    <property type="entry name" value="rhombo_GlpG"/>
    <property type="match status" value="1"/>
</dbReference>
<dbReference type="PANTHER" id="PTHR43066:SF26">
    <property type="entry name" value="RHOMBOID PROTEASE GLPG"/>
    <property type="match status" value="1"/>
</dbReference>
<dbReference type="PANTHER" id="PTHR43066">
    <property type="entry name" value="RHOMBOID-RELATED PROTEIN"/>
    <property type="match status" value="1"/>
</dbReference>
<dbReference type="Pfam" id="PF01694">
    <property type="entry name" value="Rhomboid"/>
    <property type="match status" value="1"/>
</dbReference>
<dbReference type="Pfam" id="PF12122">
    <property type="entry name" value="Rhomboid_N"/>
    <property type="match status" value="1"/>
</dbReference>
<dbReference type="SUPFAM" id="SSF144091">
    <property type="entry name" value="Rhomboid-like"/>
    <property type="match status" value="1"/>
</dbReference>
<evidence type="ECO:0000255" key="1">
    <source>
        <dbReference type="HAMAP-Rule" id="MF_01594"/>
    </source>
</evidence>